<protein>
    <recommendedName>
        <fullName evidence="1">Putative membrane protein insertion efficiency factor</fullName>
    </recommendedName>
</protein>
<reference key="1">
    <citation type="journal article" date="2008" name="Proc. Natl. Acad. Sci. U.S.A.">
        <title>Nitrogen fixation island and rhizosphere competence traits in the genome of root-associated Pseudomonas stutzeri A1501.</title>
        <authorList>
            <person name="Yan Y."/>
            <person name="Yang J."/>
            <person name="Dou Y."/>
            <person name="Chen M."/>
            <person name="Ping S."/>
            <person name="Peng J."/>
            <person name="Lu W."/>
            <person name="Zhang W."/>
            <person name="Yao Z."/>
            <person name="Li H."/>
            <person name="Liu W."/>
            <person name="He S."/>
            <person name="Geng L."/>
            <person name="Zhang X."/>
            <person name="Yang F."/>
            <person name="Yu H."/>
            <person name="Zhan Y."/>
            <person name="Li D."/>
            <person name="Lin Z."/>
            <person name="Wang Y."/>
            <person name="Elmerich C."/>
            <person name="Lin M."/>
            <person name="Jin Q."/>
        </authorList>
    </citation>
    <scope>NUCLEOTIDE SEQUENCE [LARGE SCALE GENOMIC DNA]</scope>
    <source>
        <strain>A1501</strain>
    </source>
</reference>
<evidence type="ECO:0000255" key="1">
    <source>
        <dbReference type="HAMAP-Rule" id="MF_00386"/>
    </source>
</evidence>
<evidence type="ECO:0000256" key="2">
    <source>
        <dbReference type="SAM" id="MobiDB-lite"/>
    </source>
</evidence>
<accession>A4VS83</accession>
<sequence length="81" mass="9083">MRKLAIASIRVYQYAISPMMASHCRFYPSCSCYALEAIETHGLLRGGWLSLRRLGRCHPWNPGGYDPVPTHNTSNSSPMAE</sequence>
<organism>
    <name type="scientific">Stutzerimonas stutzeri (strain A1501)</name>
    <name type="common">Pseudomonas stutzeri</name>
    <dbReference type="NCBI Taxonomy" id="379731"/>
    <lineage>
        <taxon>Bacteria</taxon>
        <taxon>Pseudomonadati</taxon>
        <taxon>Pseudomonadota</taxon>
        <taxon>Gammaproteobacteria</taxon>
        <taxon>Pseudomonadales</taxon>
        <taxon>Pseudomonadaceae</taxon>
        <taxon>Stutzerimonas</taxon>
    </lineage>
</organism>
<keyword id="KW-0997">Cell inner membrane</keyword>
<keyword id="KW-1003">Cell membrane</keyword>
<keyword id="KW-0472">Membrane</keyword>
<keyword id="KW-1185">Reference proteome</keyword>
<feature type="chain" id="PRO_1000013114" description="Putative membrane protein insertion efficiency factor">
    <location>
        <begin position="1"/>
        <end position="81"/>
    </location>
</feature>
<feature type="region of interest" description="Disordered" evidence="2">
    <location>
        <begin position="60"/>
        <end position="81"/>
    </location>
</feature>
<feature type="compositionally biased region" description="Polar residues" evidence="2">
    <location>
        <begin position="70"/>
        <end position="81"/>
    </location>
</feature>
<name>YIDD_STUS1</name>
<dbReference type="EMBL" id="CP000304">
    <property type="protein sequence ID" value="ABP81834.1"/>
    <property type="molecule type" value="Genomic_DNA"/>
</dbReference>
<dbReference type="KEGG" id="psa:PST_4212"/>
<dbReference type="eggNOG" id="COG0759">
    <property type="taxonomic scope" value="Bacteria"/>
</dbReference>
<dbReference type="HOGENOM" id="CLU_144811_6_1_6"/>
<dbReference type="Proteomes" id="UP000000233">
    <property type="component" value="Chromosome"/>
</dbReference>
<dbReference type="GO" id="GO:0005886">
    <property type="term" value="C:plasma membrane"/>
    <property type="evidence" value="ECO:0007669"/>
    <property type="project" value="UniProtKB-SubCell"/>
</dbReference>
<dbReference type="HAMAP" id="MF_00386">
    <property type="entry name" value="UPF0161_YidD"/>
    <property type="match status" value="1"/>
</dbReference>
<dbReference type="InterPro" id="IPR002696">
    <property type="entry name" value="Membr_insert_effic_factor_YidD"/>
</dbReference>
<dbReference type="NCBIfam" id="TIGR00278">
    <property type="entry name" value="membrane protein insertion efficiency factor YidD"/>
    <property type="match status" value="1"/>
</dbReference>
<dbReference type="PANTHER" id="PTHR33383">
    <property type="entry name" value="MEMBRANE PROTEIN INSERTION EFFICIENCY FACTOR-RELATED"/>
    <property type="match status" value="1"/>
</dbReference>
<dbReference type="PANTHER" id="PTHR33383:SF1">
    <property type="entry name" value="MEMBRANE PROTEIN INSERTION EFFICIENCY FACTOR-RELATED"/>
    <property type="match status" value="1"/>
</dbReference>
<dbReference type="Pfam" id="PF01809">
    <property type="entry name" value="YidD"/>
    <property type="match status" value="1"/>
</dbReference>
<dbReference type="SMART" id="SM01234">
    <property type="entry name" value="Haemolytic"/>
    <property type="match status" value="1"/>
</dbReference>
<comment type="function">
    <text evidence="1">Could be involved in insertion of integral membrane proteins into the membrane.</text>
</comment>
<comment type="subcellular location">
    <subcellularLocation>
        <location evidence="1">Cell inner membrane</location>
        <topology evidence="1">Peripheral membrane protein</topology>
        <orientation evidence="1">Cytoplasmic side</orientation>
    </subcellularLocation>
</comment>
<comment type="similarity">
    <text evidence="1">Belongs to the UPF0161 family.</text>
</comment>
<gene>
    <name type="ordered locus">PST_4212</name>
</gene>
<proteinExistence type="inferred from homology"/>